<feature type="chain" id="PRO_0000135558" description="Queuine tRNA-ribosyltransferase">
    <location>
        <begin position="1"/>
        <end position="381"/>
    </location>
</feature>
<feature type="region of interest" description="RNA binding" evidence="1">
    <location>
        <begin position="248"/>
        <end position="254"/>
    </location>
</feature>
<feature type="region of interest" description="RNA binding; important for wobble base 34 recognition" evidence="1">
    <location>
        <begin position="272"/>
        <end position="276"/>
    </location>
</feature>
<feature type="active site" description="Proton acceptor" evidence="1">
    <location>
        <position position="92"/>
    </location>
</feature>
<feature type="active site" description="Nucleophile" evidence="1">
    <location>
        <position position="267"/>
    </location>
</feature>
<feature type="binding site" evidence="1">
    <location>
        <begin position="92"/>
        <end position="96"/>
    </location>
    <ligand>
        <name>substrate</name>
    </ligand>
</feature>
<feature type="binding site" evidence="1">
    <location>
        <position position="146"/>
    </location>
    <ligand>
        <name>substrate</name>
    </ligand>
</feature>
<feature type="binding site" evidence="1">
    <location>
        <position position="190"/>
    </location>
    <ligand>
        <name>substrate</name>
    </ligand>
</feature>
<feature type="binding site" evidence="1">
    <location>
        <position position="217"/>
    </location>
    <ligand>
        <name>substrate</name>
    </ligand>
</feature>
<feature type="binding site" evidence="1">
    <location>
        <position position="305"/>
    </location>
    <ligand>
        <name>Zn(2+)</name>
        <dbReference type="ChEBI" id="CHEBI:29105"/>
    </ligand>
</feature>
<feature type="binding site" evidence="1">
    <location>
        <position position="307"/>
    </location>
    <ligand>
        <name>Zn(2+)</name>
        <dbReference type="ChEBI" id="CHEBI:29105"/>
    </ligand>
</feature>
<feature type="binding site" evidence="1">
    <location>
        <position position="310"/>
    </location>
    <ligand>
        <name>Zn(2+)</name>
        <dbReference type="ChEBI" id="CHEBI:29105"/>
    </ligand>
</feature>
<feature type="binding site" evidence="1">
    <location>
        <position position="337"/>
    </location>
    <ligand>
        <name>Zn(2+)</name>
        <dbReference type="ChEBI" id="CHEBI:29105"/>
    </ligand>
</feature>
<keyword id="KW-0328">Glycosyltransferase</keyword>
<keyword id="KW-0479">Metal-binding</keyword>
<keyword id="KW-0671">Queuosine biosynthesis</keyword>
<keyword id="KW-1185">Reference proteome</keyword>
<keyword id="KW-0808">Transferase</keyword>
<keyword id="KW-0819">tRNA processing</keyword>
<keyword id="KW-0862">Zinc</keyword>
<protein>
    <recommendedName>
        <fullName evidence="1">Queuine tRNA-ribosyltransferase</fullName>
        <ecNumber evidence="1">2.4.2.29</ecNumber>
    </recommendedName>
    <alternativeName>
        <fullName evidence="1">Guanine insertion enzyme</fullName>
    </alternativeName>
    <alternativeName>
        <fullName evidence="1">tRNA-guanine transglycosylase</fullName>
    </alternativeName>
</protein>
<evidence type="ECO:0000255" key="1">
    <source>
        <dbReference type="HAMAP-Rule" id="MF_00168"/>
    </source>
</evidence>
<comment type="function">
    <text evidence="1">Catalyzes the base-exchange of a guanine (G) residue with the queuine precursor 7-aminomethyl-7-deazaguanine (PreQ1) at position 34 (anticodon wobble position) in tRNAs with GU(N) anticodons (tRNA-Asp, -Asn, -His and -Tyr). Catalysis occurs through a double-displacement mechanism. The nucleophile active site attacks the C1' of nucleotide 34 to detach the guanine base from the RNA, forming a covalent enzyme-RNA intermediate. The proton acceptor active site deprotonates the incoming PreQ1, allowing a nucleophilic attack on the C1' of the ribose to form the product. After dissociation, two additional enzymatic reactions on the tRNA convert PreQ1 to queuine (Q), resulting in the hypermodified nucleoside queuosine (7-(((4,5-cis-dihydroxy-2-cyclopenten-1-yl)amino)methyl)-7-deazaguanosine).</text>
</comment>
<comment type="catalytic activity">
    <reaction evidence="1">
        <text>7-aminomethyl-7-carbaguanine + guanosine(34) in tRNA = 7-aminomethyl-7-carbaguanosine(34) in tRNA + guanine</text>
        <dbReference type="Rhea" id="RHEA:24104"/>
        <dbReference type="Rhea" id="RHEA-COMP:10341"/>
        <dbReference type="Rhea" id="RHEA-COMP:10342"/>
        <dbReference type="ChEBI" id="CHEBI:16235"/>
        <dbReference type="ChEBI" id="CHEBI:58703"/>
        <dbReference type="ChEBI" id="CHEBI:74269"/>
        <dbReference type="ChEBI" id="CHEBI:82833"/>
        <dbReference type="EC" id="2.4.2.29"/>
    </reaction>
</comment>
<comment type="cofactor">
    <cofactor evidence="1">
        <name>Zn(2+)</name>
        <dbReference type="ChEBI" id="CHEBI:29105"/>
    </cofactor>
    <text evidence="1">Binds 1 zinc ion per subunit.</text>
</comment>
<comment type="pathway">
    <text evidence="1">tRNA modification; tRNA-queuosine biosynthesis.</text>
</comment>
<comment type="subunit">
    <text evidence="1">Homodimer. Within each dimer, one monomer is responsible for RNA recognition and catalysis, while the other monomer binds to the replacement base PreQ1.</text>
</comment>
<comment type="similarity">
    <text evidence="1">Belongs to the queuine tRNA-ribosyltransferase family.</text>
</comment>
<organism>
    <name type="scientific">Xanthomonas oryzae pv. oryzae (strain KACC10331 / KXO85)</name>
    <dbReference type="NCBI Taxonomy" id="291331"/>
    <lineage>
        <taxon>Bacteria</taxon>
        <taxon>Pseudomonadati</taxon>
        <taxon>Pseudomonadota</taxon>
        <taxon>Gammaproteobacteria</taxon>
        <taxon>Lysobacterales</taxon>
        <taxon>Lysobacteraceae</taxon>
        <taxon>Xanthomonas</taxon>
    </lineage>
</organism>
<accession>Q5GZY3</accession>
<reference key="1">
    <citation type="journal article" date="2005" name="Nucleic Acids Res.">
        <title>The genome sequence of Xanthomonas oryzae pathovar oryzae KACC10331, the bacterial blight pathogen of rice.</title>
        <authorList>
            <person name="Lee B.-M."/>
            <person name="Park Y.-J."/>
            <person name="Park D.-S."/>
            <person name="Kang H.-W."/>
            <person name="Kim J.-G."/>
            <person name="Song E.-S."/>
            <person name="Park I.-C."/>
            <person name="Yoon U.-H."/>
            <person name="Hahn J.-H."/>
            <person name="Koo B.-S."/>
            <person name="Lee G.-B."/>
            <person name="Kim H."/>
            <person name="Park H.-S."/>
            <person name="Yoon K.-O."/>
            <person name="Kim J.-H."/>
            <person name="Jung C.-H."/>
            <person name="Koh N.-H."/>
            <person name="Seo J.-S."/>
            <person name="Go S.-J."/>
        </authorList>
    </citation>
    <scope>NUCLEOTIDE SEQUENCE [LARGE SCALE GENOMIC DNA]</scope>
    <source>
        <strain>KACC10331 / KXO85</strain>
    </source>
</reference>
<proteinExistence type="inferred from homology"/>
<name>TGT_XANOR</name>
<gene>
    <name evidence="1" type="primary">tgt</name>
    <name type="ordered locus">XOO2484</name>
</gene>
<dbReference type="EC" id="2.4.2.29" evidence="1"/>
<dbReference type="EMBL" id="AE013598">
    <property type="protein sequence ID" value="AAW75738.1"/>
    <property type="molecule type" value="Genomic_DNA"/>
</dbReference>
<dbReference type="SMR" id="Q5GZY3"/>
<dbReference type="STRING" id="291331.XOO2484"/>
<dbReference type="KEGG" id="xoo:XOO2484"/>
<dbReference type="HOGENOM" id="CLU_022060_0_1_6"/>
<dbReference type="UniPathway" id="UPA00392"/>
<dbReference type="Proteomes" id="UP000006735">
    <property type="component" value="Chromosome"/>
</dbReference>
<dbReference type="GO" id="GO:0005829">
    <property type="term" value="C:cytosol"/>
    <property type="evidence" value="ECO:0007669"/>
    <property type="project" value="TreeGrafter"/>
</dbReference>
<dbReference type="GO" id="GO:0046872">
    <property type="term" value="F:metal ion binding"/>
    <property type="evidence" value="ECO:0007669"/>
    <property type="project" value="UniProtKB-KW"/>
</dbReference>
<dbReference type="GO" id="GO:0008479">
    <property type="term" value="F:tRNA-guanosine(34) queuine transglycosylase activity"/>
    <property type="evidence" value="ECO:0007669"/>
    <property type="project" value="UniProtKB-UniRule"/>
</dbReference>
<dbReference type="GO" id="GO:0008616">
    <property type="term" value="P:queuosine biosynthetic process"/>
    <property type="evidence" value="ECO:0007669"/>
    <property type="project" value="UniProtKB-UniRule"/>
</dbReference>
<dbReference type="GO" id="GO:0002099">
    <property type="term" value="P:tRNA wobble guanine modification"/>
    <property type="evidence" value="ECO:0007669"/>
    <property type="project" value="TreeGrafter"/>
</dbReference>
<dbReference type="GO" id="GO:0101030">
    <property type="term" value="P:tRNA-guanine transglycosylation"/>
    <property type="evidence" value="ECO:0007669"/>
    <property type="project" value="InterPro"/>
</dbReference>
<dbReference type="FunFam" id="3.20.20.105:FF:000001">
    <property type="entry name" value="Queuine tRNA-ribosyltransferase"/>
    <property type="match status" value="1"/>
</dbReference>
<dbReference type="Gene3D" id="3.20.20.105">
    <property type="entry name" value="Queuine tRNA-ribosyltransferase-like"/>
    <property type="match status" value="1"/>
</dbReference>
<dbReference type="HAMAP" id="MF_00168">
    <property type="entry name" value="Q_tRNA_Tgt"/>
    <property type="match status" value="1"/>
</dbReference>
<dbReference type="InterPro" id="IPR050076">
    <property type="entry name" value="ArchSynthase1/Queuine_TRR"/>
</dbReference>
<dbReference type="InterPro" id="IPR004803">
    <property type="entry name" value="TGT"/>
</dbReference>
<dbReference type="InterPro" id="IPR036511">
    <property type="entry name" value="TGT-like_sf"/>
</dbReference>
<dbReference type="InterPro" id="IPR002616">
    <property type="entry name" value="tRNA_ribo_trans-like"/>
</dbReference>
<dbReference type="NCBIfam" id="TIGR00430">
    <property type="entry name" value="Q_tRNA_tgt"/>
    <property type="match status" value="1"/>
</dbReference>
<dbReference type="NCBIfam" id="TIGR00449">
    <property type="entry name" value="tgt_general"/>
    <property type="match status" value="1"/>
</dbReference>
<dbReference type="PANTHER" id="PTHR46499">
    <property type="entry name" value="QUEUINE TRNA-RIBOSYLTRANSFERASE"/>
    <property type="match status" value="1"/>
</dbReference>
<dbReference type="PANTHER" id="PTHR46499:SF1">
    <property type="entry name" value="QUEUINE TRNA-RIBOSYLTRANSFERASE"/>
    <property type="match status" value="1"/>
</dbReference>
<dbReference type="Pfam" id="PF01702">
    <property type="entry name" value="TGT"/>
    <property type="match status" value="1"/>
</dbReference>
<dbReference type="SUPFAM" id="SSF51713">
    <property type="entry name" value="tRNA-guanine transglycosylase"/>
    <property type="match status" value="1"/>
</dbReference>
<sequence length="381" mass="42114">MSRLQFQLQATDGHARRGRLTFPRGTVETPAFMPVGTYGSVKGILPEHIRALGAEIILGNTFHLYLRPGLDVIGDHGGLHGFARWDGPILTDSGGFQVFSLAHRRKITEQGVTFSSPTDGARVFLGPEESMKIQKVLDSDIVMIFDECTPYPATEDLARRSMELSLRWAQRSRDAHDGLGNDAALFGIVQGGVHPDLRSRSLDGLQSIGFDGYAIGGLAVGEPEHERNAMLEHLHPRLPAECPRYLMGVGRPEDLVEGVARGVDMFDCVMPTRNARNGHYFTSFGTVRIRNAKYERDLDTIEPGCGCHACSSGYTRSYLRHLDRCNEMLAPMLGTLHNLWYYEKLMADMRAAIASGTFVEFRRSFYAARGATTPPLPGETS</sequence>